<organism>
    <name type="scientific">Apis mellifera</name>
    <name type="common">Honeybee</name>
    <dbReference type="NCBI Taxonomy" id="7460"/>
    <lineage>
        <taxon>Eukaryota</taxon>
        <taxon>Metazoa</taxon>
        <taxon>Ecdysozoa</taxon>
        <taxon>Arthropoda</taxon>
        <taxon>Hexapoda</taxon>
        <taxon>Insecta</taxon>
        <taxon>Pterygota</taxon>
        <taxon>Neoptera</taxon>
        <taxon>Endopterygota</taxon>
        <taxon>Hymenoptera</taxon>
        <taxon>Apocrita</taxon>
        <taxon>Aculeata</taxon>
        <taxon>Apoidea</taxon>
        <taxon>Anthophila</taxon>
        <taxon>Apidae</taxon>
        <taxon>Apis</taxon>
    </lineage>
</organism>
<name>EMS_APIME</name>
<comment type="subcellular location">
    <subcellularLocation>
        <location evidence="2">Nucleus</location>
    </subcellularLocation>
</comment>
<proteinExistence type="predicted"/>
<dbReference type="EMBL" id="M29492">
    <property type="protein sequence ID" value="AAA27727.1"/>
    <property type="molecule type" value="Genomic_DNA"/>
</dbReference>
<dbReference type="PIR" id="C34510">
    <property type="entry name" value="C34510"/>
</dbReference>
<dbReference type="SMR" id="P15858"/>
<dbReference type="PaxDb" id="7460-GB50532-PA"/>
<dbReference type="eggNOG" id="KOG0488">
    <property type="taxonomic scope" value="Eukaryota"/>
</dbReference>
<dbReference type="InParanoid" id="P15858"/>
<dbReference type="Proteomes" id="UP000005203">
    <property type="component" value="Unplaced"/>
</dbReference>
<dbReference type="GO" id="GO:0005634">
    <property type="term" value="C:nucleus"/>
    <property type="evidence" value="ECO:0007669"/>
    <property type="project" value="UniProtKB-SubCell"/>
</dbReference>
<dbReference type="GO" id="GO:0000981">
    <property type="term" value="F:DNA-binding transcription factor activity, RNA polymerase II-specific"/>
    <property type="evidence" value="ECO:0007669"/>
    <property type="project" value="InterPro"/>
</dbReference>
<dbReference type="GO" id="GO:0000978">
    <property type="term" value="F:RNA polymerase II cis-regulatory region sequence-specific DNA binding"/>
    <property type="evidence" value="ECO:0007669"/>
    <property type="project" value="TreeGrafter"/>
</dbReference>
<dbReference type="GO" id="GO:0030154">
    <property type="term" value="P:cell differentiation"/>
    <property type="evidence" value="ECO:0007669"/>
    <property type="project" value="TreeGrafter"/>
</dbReference>
<dbReference type="CDD" id="cd00086">
    <property type="entry name" value="homeodomain"/>
    <property type="match status" value="1"/>
</dbReference>
<dbReference type="FunFam" id="1.10.10.60:FF:000836">
    <property type="match status" value="1"/>
</dbReference>
<dbReference type="Gene3D" id="1.10.10.60">
    <property type="entry name" value="Homeodomain-like"/>
    <property type="match status" value="1"/>
</dbReference>
<dbReference type="InterPro" id="IPR001356">
    <property type="entry name" value="HD"/>
</dbReference>
<dbReference type="InterPro" id="IPR020479">
    <property type="entry name" value="HD_metazoa"/>
</dbReference>
<dbReference type="InterPro" id="IPR017970">
    <property type="entry name" value="Homeobox_CS"/>
</dbReference>
<dbReference type="InterPro" id="IPR050394">
    <property type="entry name" value="Homeobox_NK-like"/>
</dbReference>
<dbReference type="InterPro" id="IPR009057">
    <property type="entry name" value="Homeodomain-like_sf"/>
</dbReference>
<dbReference type="InterPro" id="IPR000047">
    <property type="entry name" value="HTH_motif"/>
</dbReference>
<dbReference type="PANTHER" id="PTHR24340">
    <property type="entry name" value="HOMEOBOX PROTEIN NKX"/>
    <property type="match status" value="1"/>
</dbReference>
<dbReference type="PANTHER" id="PTHR24340:SF37">
    <property type="entry name" value="HOMEOBOX PROTEIN SLOU"/>
    <property type="match status" value="1"/>
</dbReference>
<dbReference type="Pfam" id="PF00046">
    <property type="entry name" value="Homeodomain"/>
    <property type="match status" value="1"/>
</dbReference>
<dbReference type="PRINTS" id="PR00024">
    <property type="entry name" value="HOMEOBOX"/>
</dbReference>
<dbReference type="PRINTS" id="PR00031">
    <property type="entry name" value="HTHREPRESSR"/>
</dbReference>
<dbReference type="SMART" id="SM00389">
    <property type="entry name" value="HOX"/>
    <property type="match status" value="1"/>
</dbReference>
<dbReference type="SUPFAM" id="SSF46689">
    <property type="entry name" value="Homeodomain-like"/>
    <property type="match status" value="1"/>
</dbReference>
<dbReference type="PROSITE" id="PS00027">
    <property type="entry name" value="HOMEOBOX_1"/>
    <property type="match status" value="1"/>
</dbReference>
<dbReference type="PROSITE" id="PS50071">
    <property type="entry name" value="HOMEOBOX_2"/>
    <property type="match status" value="1"/>
</dbReference>
<reference key="1">
    <citation type="journal article" date="1989" name="Proc. Natl. Acad. Sci. U.S.A.">
        <title>Comparison of homeobox-containing genes of the honeybee and Drosophila.</title>
        <authorList>
            <person name="Walldorf U."/>
            <person name="Fleig R."/>
            <person name="Gehring W.J."/>
        </authorList>
    </citation>
    <scope>NUCLEOTIDE SEQUENCE [GENOMIC DNA]</scope>
</reference>
<sequence>RRWDRREARRARTAFTYEQLVALENKFKTTRYLSVCERLNLALSLSLTETQVKIWFQNRRTKWKKQNPGLDVIS</sequence>
<protein>
    <recommendedName>
        <fullName>Homeobox protein H40</fullName>
    </recommendedName>
</protein>
<keyword id="KW-0217">Developmental protein</keyword>
<keyword id="KW-0238">DNA-binding</keyword>
<keyword id="KW-0371">Homeobox</keyword>
<keyword id="KW-0539">Nucleus</keyword>
<keyword id="KW-1185">Reference proteome</keyword>
<accession>P15858</accession>
<evidence type="ECO:0000255" key="1">
    <source>
        <dbReference type="PROSITE-ProRule" id="PRU00108"/>
    </source>
</evidence>
<evidence type="ECO:0000305" key="2"/>
<feature type="chain" id="PRO_0000049058" description="Homeobox protein H40">
    <location>
        <begin position="1" status="less than"/>
        <end position="74" status="greater than"/>
    </location>
</feature>
<feature type="DNA-binding region" description="Homeobox" evidence="1">
    <location>
        <begin position="8"/>
        <end position="67"/>
    </location>
</feature>
<feature type="non-terminal residue">
    <location>
        <position position="1"/>
    </location>
</feature>
<feature type="non-terminal residue">
    <location>
        <position position="74"/>
    </location>
</feature>